<dbReference type="EMBL" id="CP000388">
    <property type="protein sequence ID" value="ABG40262.1"/>
    <property type="molecule type" value="Genomic_DNA"/>
</dbReference>
<dbReference type="RefSeq" id="WP_011574563.1">
    <property type="nucleotide sequence ID" value="NC_008228.1"/>
</dbReference>
<dbReference type="SMR" id="Q15V26"/>
<dbReference type="STRING" id="342610.Patl_1741"/>
<dbReference type="KEGG" id="pat:Patl_1741"/>
<dbReference type="eggNOG" id="COG2914">
    <property type="taxonomic scope" value="Bacteria"/>
</dbReference>
<dbReference type="HOGENOM" id="CLU_150721_1_0_6"/>
<dbReference type="OrthoDB" id="9796575at2"/>
<dbReference type="Proteomes" id="UP000001981">
    <property type="component" value="Chromosome"/>
</dbReference>
<dbReference type="Gene3D" id="3.10.20.280">
    <property type="entry name" value="RnfH-like"/>
    <property type="match status" value="1"/>
</dbReference>
<dbReference type="HAMAP" id="MF_00460">
    <property type="entry name" value="UPF0125_RnfH"/>
    <property type="match status" value="1"/>
</dbReference>
<dbReference type="InterPro" id="IPR016155">
    <property type="entry name" value="Mopterin_synth/thiamin_S_b"/>
</dbReference>
<dbReference type="InterPro" id="IPR005346">
    <property type="entry name" value="RnfH"/>
</dbReference>
<dbReference type="InterPro" id="IPR037021">
    <property type="entry name" value="RnfH_sf"/>
</dbReference>
<dbReference type="NCBIfam" id="NF002490">
    <property type="entry name" value="PRK01777.1"/>
    <property type="match status" value="1"/>
</dbReference>
<dbReference type="PANTHER" id="PTHR37483">
    <property type="entry name" value="UPF0125 PROTEIN RATB"/>
    <property type="match status" value="1"/>
</dbReference>
<dbReference type="PANTHER" id="PTHR37483:SF1">
    <property type="entry name" value="UPF0125 PROTEIN RATB"/>
    <property type="match status" value="1"/>
</dbReference>
<dbReference type="Pfam" id="PF03658">
    <property type="entry name" value="Ub-RnfH"/>
    <property type="match status" value="1"/>
</dbReference>
<dbReference type="SUPFAM" id="SSF54285">
    <property type="entry name" value="MoaD/ThiS"/>
    <property type="match status" value="1"/>
</dbReference>
<sequence>MTDKQINLEVAYALPDRQALLEVVVEMGHTVEEAIKASGILQRFDDIDLSKSKVGIWNRTCKLSDVPQDGDRIEIYRPLIADPKEARRRRAEKAKEEGRANKVTGGRA</sequence>
<feature type="chain" id="PRO_1000206290" description="Protein RnfH">
    <location>
        <begin position="1"/>
        <end position="108"/>
    </location>
</feature>
<feature type="region of interest" description="Disordered" evidence="2">
    <location>
        <begin position="86"/>
        <end position="108"/>
    </location>
</feature>
<organism>
    <name type="scientific">Pseudoalteromonas atlantica (strain T6c / ATCC BAA-1087)</name>
    <dbReference type="NCBI Taxonomy" id="3042615"/>
    <lineage>
        <taxon>Bacteria</taxon>
        <taxon>Pseudomonadati</taxon>
        <taxon>Pseudomonadota</taxon>
        <taxon>Gammaproteobacteria</taxon>
        <taxon>Alteromonadales</taxon>
        <taxon>Alteromonadaceae</taxon>
        <taxon>Paraglaciecola</taxon>
    </lineage>
</organism>
<accession>Q15V26</accession>
<gene>
    <name evidence="1" type="primary">rnfH</name>
    <name type="ordered locus">Patl_1741</name>
</gene>
<proteinExistence type="inferred from homology"/>
<name>RNFH_PSEA6</name>
<reference key="1">
    <citation type="submission" date="2006-06" db="EMBL/GenBank/DDBJ databases">
        <title>Complete sequence of Pseudoalteromonas atlantica T6c.</title>
        <authorList>
            <consortium name="US DOE Joint Genome Institute"/>
            <person name="Copeland A."/>
            <person name="Lucas S."/>
            <person name="Lapidus A."/>
            <person name="Barry K."/>
            <person name="Detter J.C."/>
            <person name="Glavina del Rio T."/>
            <person name="Hammon N."/>
            <person name="Israni S."/>
            <person name="Dalin E."/>
            <person name="Tice H."/>
            <person name="Pitluck S."/>
            <person name="Saunders E."/>
            <person name="Brettin T."/>
            <person name="Bruce D."/>
            <person name="Han C."/>
            <person name="Tapia R."/>
            <person name="Gilna P."/>
            <person name="Schmutz J."/>
            <person name="Larimer F."/>
            <person name="Land M."/>
            <person name="Hauser L."/>
            <person name="Kyrpides N."/>
            <person name="Kim E."/>
            <person name="Karls A.C."/>
            <person name="Bartlett D."/>
            <person name="Higgins B.P."/>
            <person name="Richardson P."/>
        </authorList>
    </citation>
    <scope>NUCLEOTIDE SEQUENCE [LARGE SCALE GENOMIC DNA]</scope>
    <source>
        <strain>T6c / ATCC BAA-1087</strain>
    </source>
</reference>
<comment type="similarity">
    <text evidence="1">Belongs to the UPF0125 (RnfH) family.</text>
</comment>
<protein>
    <recommendedName>
        <fullName evidence="1">Protein RnfH</fullName>
    </recommendedName>
</protein>
<evidence type="ECO:0000255" key="1">
    <source>
        <dbReference type="HAMAP-Rule" id="MF_00460"/>
    </source>
</evidence>
<evidence type="ECO:0000256" key="2">
    <source>
        <dbReference type="SAM" id="MobiDB-lite"/>
    </source>
</evidence>